<proteinExistence type="inferred from homology"/>
<comment type="function">
    <text evidence="1">F(1)F(0) ATP synthase produces ATP from ADP in the presence of a proton or sodium gradient. F-type ATPases consist of two structural domains, F(1) containing the extramembraneous catalytic core and F(0) containing the membrane proton channel, linked together by a central stalk and a peripheral stalk. During catalysis, ATP synthesis in the catalytic domain of F(1) is coupled via a rotary mechanism of the central stalk subunits to proton translocation.</text>
</comment>
<comment type="function">
    <text evidence="1">Component of the F(0) channel, it forms part of the peripheral stalk, linking F(1) to F(0).</text>
</comment>
<comment type="subunit">
    <text evidence="1">F-type ATPases have 2 components, F(1) - the catalytic core - and F(0) - the membrane proton channel. F(1) has five subunits: alpha(3), beta(3), gamma(1), delta(1), epsilon(1). F(0) has three main subunits: a(1), b(2) and c(10-14). The alpha and beta chains form an alternating ring which encloses part of the gamma chain. F(1) is attached to F(0) by a central stalk formed by the gamma and epsilon chains, while a peripheral stalk is formed by the delta and b chains.</text>
</comment>
<comment type="subcellular location">
    <subcellularLocation>
        <location evidence="1">Cell inner membrane</location>
        <topology evidence="1">Single-pass membrane protein</topology>
    </subcellularLocation>
</comment>
<comment type="similarity">
    <text evidence="1">Belongs to the ATPase B chain family.</text>
</comment>
<keyword id="KW-0066">ATP synthesis</keyword>
<keyword id="KW-0997">Cell inner membrane</keyword>
<keyword id="KW-1003">Cell membrane</keyword>
<keyword id="KW-0138">CF(0)</keyword>
<keyword id="KW-0375">Hydrogen ion transport</keyword>
<keyword id="KW-0406">Ion transport</keyword>
<keyword id="KW-0472">Membrane</keyword>
<keyword id="KW-0812">Transmembrane</keyword>
<keyword id="KW-1133">Transmembrane helix</keyword>
<keyword id="KW-0813">Transport</keyword>
<accession>A1V8T5</accession>
<dbReference type="EMBL" id="CP000526">
    <property type="protein sequence ID" value="ABM49572.1"/>
    <property type="molecule type" value="Genomic_DNA"/>
</dbReference>
<dbReference type="RefSeq" id="WP_004185283.1">
    <property type="nucleotide sequence ID" value="NC_008785.1"/>
</dbReference>
<dbReference type="SMR" id="A1V8T5"/>
<dbReference type="KEGG" id="bmv:BMASAVP1_A3359"/>
<dbReference type="HOGENOM" id="CLU_079215_4_5_4"/>
<dbReference type="GO" id="GO:0005886">
    <property type="term" value="C:plasma membrane"/>
    <property type="evidence" value="ECO:0007669"/>
    <property type="project" value="UniProtKB-SubCell"/>
</dbReference>
<dbReference type="GO" id="GO:0045259">
    <property type="term" value="C:proton-transporting ATP synthase complex"/>
    <property type="evidence" value="ECO:0007669"/>
    <property type="project" value="UniProtKB-KW"/>
</dbReference>
<dbReference type="GO" id="GO:0046933">
    <property type="term" value="F:proton-transporting ATP synthase activity, rotational mechanism"/>
    <property type="evidence" value="ECO:0007669"/>
    <property type="project" value="UniProtKB-UniRule"/>
</dbReference>
<dbReference type="GO" id="GO:0046961">
    <property type="term" value="F:proton-transporting ATPase activity, rotational mechanism"/>
    <property type="evidence" value="ECO:0007669"/>
    <property type="project" value="TreeGrafter"/>
</dbReference>
<dbReference type="CDD" id="cd06503">
    <property type="entry name" value="ATP-synt_Fo_b"/>
    <property type="match status" value="1"/>
</dbReference>
<dbReference type="Gene3D" id="6.10.250.1580">
    <property type="match status" value="1"/>
</dbReference>
<dbReference type="HAMAP" id="MF_01398">
    <property type="entry name" value="ATP_synth_b_bprime"/>
    <property type="match status" value="1"/>
</dbReference>
<dbReference type="InterPro" id="IPR028987">
    <property type="entry name" value="ATP_synth_B-like_membr_sf"/>
</dbReference>
<dbReference type="InterPro" id="IPR002146">
    <property type="entry name" value="ATP_synth_b/b'su_bac/chlpt"/>
</dbReference>
<dbReference type="InterPro" id="IPR005864">
    <property type="entry name" value="ATP_synth_F0_bsu_bac"/>
</dbReference>
<dbReference type="InterPro" id="IPR050059">
    <property type="entry name" value="ATP_synthase_B_chain"/>
</dbReference>
<dbReference type="NCBIfam" id="TIGR01144">
    <property type="entry name" value="ATP_synt_b"/>
    <property type="match status" value="1"/>
</dbReference>
<dbReference type="NCBIfam" id="NF004411">
    <property type="entry name" value="PRK05759.1-2"/>
    <property type="match status" value="1"/>
</dbReference>
<dbReference type="PANTHER" id="PTHR33445:SF1">
    <property type="entry name" value="ATP SYNTHASE SUBUNIT B"/>
    <property type="match status" value="1"/>
</dbReference>
<dbReference type="PANTHER" id="PTHR33445">
    <property type="entry name" value="ATP SYNTHASE SUBUNIT B', CHLOROPLASTIC"/>
    <property type="match status" value="1"/>
</dbReference>
<dbReference type="Pfam" id="PF00430">
    <property type="entry name" value="ATP-synt_B"/>
    <property type="match status" value="1"/>
</dbReference>
<dbReference type="SUPFAM" id="SSF81573">
    <property type="entry name" value="F1F0 ATP synthase subunit B, membrane domain"/>
    <property type="match status" value="1"/>
</dbReference>
<name>ATPF_BURMS</name>
<organism>
    <name type="scientific">Burkholderia mallei (strain SAVP1)</name>
    <dbReference type="NCBI Taxonomy" id="320388"/>
    <lineage>
        <taxon>Bacteria</taxon>
        <taxon>Pseudomonadati</taxon>
        <taxon>Pseudomonadota</taxon>
        <taxon>Betaproteobacteria</taxon>
        <taxon>Burkholderiales</taxon>
        <taxon>Burkholderiaceae</taxon>
        <taxon>Burkholderia</taxon>
        <taxon>pseudomallei group</taxon>
    </lineage>
</organism>
<feature type="chain" id="PRO_0000368387" description="ATP synthase subunit b">
    <location>
        <begin position="1"/>
        <end position="156"/>
    </location>
</feature>
<feature type="transmembrane region" description="Helical" evidence="1">
    <location>
        <begin position="7"/>
        <end position="29"/>
    </location>
</feature>
<sequence length="156" mass="17122">MNLNATLFAQMVVFLVLAWFTMKFVWPPLINALDERSKKIADGLAAAEKGKAELEAAHKRVDQELAQARNDGQQRIADAEKRALAVADEIKTNAQAEAARIIAQAKAEAEQQIVKARETLRGEVAALAVKGAEQILKREVDQTAHAELLNQLKAEL</sequence>
<gene>
    <name evidence="1" type="primary">atpF</name>
    <name type="ordered locus">BMASAVP1_A3359</name>
</gene>
<evidence type="ECO:0000255" key="1">
    <source>
        <dbReference type="HAMAP-Rule" id="MF_01398"/>
    </source>
</evidence>
<reference key="1">
    <citation type="journal article" date="2010" name="Genome Biol. Evol.">
        <title>Continuing evolution of Burkholderia mallei through genome reduction and large-scale rearrangements.</title>
        <authorList>
            <person name="Losada L."/>
            <person name="Ronning C.M."/>
            <person name="DeShazer D."/>
            <person name="Woods D."/>
            <person name="Fedorova N."/>
            <person name="Kim H.S."/>
            <person name="Shabalina S.A."/>
            <person name="Pearson T.R."/>
            <person name="Brinkac L."/>
            <person name="Tan P."/>
            <person name="Nandi T."/>
            <person name="Crabtree J."/>
            <person name="Badger J."/>
            <person name="Beckstrom-Sternberg S."/>
            <person name="Saqib M."/>
            <person name="Schutzer S.E."/>
            <person name="Keim P."/>
            <person name="Nierman W.C."/>
        </authorList>
    </citation>
    <scope>NUCLEOTIDE SEQUENCE [LARGE SCALE GENOMIC DNA]</scope>
    <source>
        <strain>SAVP1</strain>
    </source>
</reference>
<protein>
    <recommendedName>
        <fullName evidence="1">ATP synthase subunit b</fullName>
    </recommendedName>
    <alternativeName>
        <fullName evidence="1">ATP synthase F(0) sector subunit b</fullName>
    </alternativeName>
    <alternativeName>
        <fullName evidence="1">ATPase subunit I</fullName>
    </alternativeName>
    <alternativeName>
        <fullName evidence="1">F-type ATPase subunit b</fullName>
        <shortName evidence="1">F-ATPase subunit b</shortName>
    </alternativeName>
</protein>